<name>Y1270_HALH5</name>
<feature type="chain" id="PRO_0000304817" description="UPF0473 protein BH1270">
    <location>
        <begin position="1"/>
        <end position="93"/>
    </location>
</feature>
<dbReference type="EMBL" id="BA000004">
    <property type="protein sequence ID" value="BAB04989.1"/>
    <property type="molecule type" value="Genomic_DNA"/>
</dbReference>
<dbReference type="PIR" id="F83808">
    <property type="entry name" value="F83808"/>
</dbReference>
<dbReference type="RefSeq" id="WP_010897438.1">
    <property type="nucleotide sequence ID" value="NC_002570.2"/>
</dbReference>
<dbReference type="STRING" id="272558.gene:10727164"/>
<dbReference type="KEGG" id="bha:BH1270"/>
<dbReference type="eggNOG" id="COG3906">
    <property type="taxonomic scope" value="Bacteria"/>
</dbReference>
<dbReference type="HOGENOM" id="CLU_146610_2_1_9"/>
<dbReference type="OrthoDB" id="2086132at2"/>
<dbReference type="Proteomes" id="UP000001258">
    <property type="component" value="Chromosome"/>
</dbReference>
<dbReference type="HAMAP" id="MF_01448">
    <property type="entry name" value="UPF0473"/>
    <property type="match status" value="1"/>
</dbReference>
<dbReference type="InterPro" id="IPR009711">
    <property type="entry name" value="UPF0473"/>
</dbReference>
<dbReference type="NCBIfam" id="NF010217">
    <property type="entry name" value="PRK13678.1-4"/>
    <property type="match status" value="1"/>
</dbReference>
<dbReference type="NCBIfam" id="NF010222">
    <property type="entry name" value="PRK13678.2-5"/>
    <property type="match status" value="1"/>
</dbReference>
<dbReference type="PANTHER" id="PTHR40066">
    <property type="entry name" value="UPF0473 PROTEIN CBO2561/CLC_2432"/>
    <property type="match status" value="1"/>
</dbReference>
<dbReference type="PANTHER" id="PTHR40066:SF1">
    <property type="entry name" value="UPF0473 PROTEIN CBO2561_CLC_2432"/>
    <property type="match status" value="1"/>
</dbReference>
<dbReference type="Pfam" id="PF06949">
    <property type="entry name" value="DUF1292"/>
    <property type="match status" value="1"/>
</dbReference>
<reference key="1">
    <citation type="journal article" date="2000" name="Nucleic Acids Res.">
        <title>Complete genome sequence of the alkaliphilic bacterium Bacillus halodurans and genomic sequence comparison with Bacillus subtilis.</title>
        <authorList>
            <person name="Takami H."/>
            <person name="Nakasone K."/>
            <person name="Takaki Y."/>
            <person name="Maeno G."/>
            <person name="Sasaki R."/>
            <person name="Masui N."/>
            <person name="Fuji F."/>
            <person name="Hirama C."/>
            <person name="Nakamura Y."/>
            <person name="Ogasawara N."/>
            <person name="Kuhara S."/>
            <person name="Horikoshi K."/>
        </authorList>
    </citation>
    <scope>NUCLEOTIDE SEQUENCE [LARGE SCALE GENOMIC DNA]</scope>
    <source>
        <strain>ATCC BAA-125 / DSM 18197 / FERM 7344 / JCM 9153 / C-125</strain>
    </source>
</reference>
<sequence>MAQEEKERIVIPDENGDEHLFDELFKFTVDETGKSYILLTPVGEEEGEEEEAEVFAFRFEDREGEENDIALFPIETDEEWDMVEEMLNTFSEE</sequence>
<accession>Q9KDE3</accession>
<gene>
    <name type="ordered locus">BH1270</name>
</gene>
<proteinExistence type="inferred from homology"/>
<organism>
    <name type="scientific">Halalkalibacterium halodurans (strain ATCC BAA-125 / DSM 18197 / FERM 7344 / JCM 9153 / C-125)</name>
    <name type="common">Bacillus halodurans</name>
    <dbReference type="NCBI Taxonomy" id="272558"/>
    <lineage>
        <taxon>Bacteria</taxon>
        <taxon>Bacillati</taxon>
        <taxon>Bacillota</taxon>
        <taxon>Bacilli</taxon>
        <taxon>Bacillales</taxon>
        <taxon>Bacillaceae</taxon>
        <taxon>Halalkalibacterium (ex Joshi et al. 2022)</taxon>
    </lineage>
</organism>
<evidence type="ECO:0000255" key="1">
    <source>
        <dbReference type="HAMAP-Rule" id="MF_01448"/>
    </source>
</evidence>
<keyword id="KW-1185">Reference proteome</keyword>
<protein>
    <recommendedName>
        <fullName evidence="1">UPF0473 protein BH1270</fullName>
    </recommendedName>
</protein>
<comment type="similarity">
    <text evidence="1">Belongs to the UPF0473 family.</text>
</comment>